<accession>P0DH74</accession>
<accession>Q47741</accession>
<comment type="function">
    <text>Catalyzes the conversion of dihydroorotate to orotate with NAD(+) as electron acceptor.</text>
</comment>
<comment type="catalytic activity">
    <reaction evidence="2">
        <text>(S)-dihydroorotate + NAD(+) = orotate + NADH + H(+)</text>
        <dbReference type="Rhea" id="RHEA:13513"/>
        <dbReference type="ChEBI" id="CHEBI:15378"/>
        <dbReference type="ChEBI" id="CHEBI:30839"/>
        <dbReference type="ChEBI" id="CHEBI:30864"/>
        <dbReference type="ChEBI" id="CHEBI:57540"/>
        <dbReference type="ChEBI" id="CHEBI:57945"/>
        <dbReference type="EC" id="1.3.1.14"/>
    </reaction>
</comment>
<comment type="cofactor">
    <cofactor evidence="2">
        <name>FMN</name>
        <dbReference type="ChEBI" id="CHEBI:58210"/>
    </cofactor>
    <text evidence="2">Binds 1 FMN per subunit.</text>
</comment>
<comment type="biophysicochemical properties">
    <kinetics>
        <KM evidence="2">36.4 uM for orotate</KM>
        <KM evidence="2">33.2 uM for dihydroorotate</KM>
        <KM evidence="2">135 uM for NAD(+)</KM>
        <KM evidence="2">27 uM for NADH</KM>
    </kinetics>
    <phDependence>
        <text evidence="2">Optimum pH is 6-8.</text>
    </phDependence>
</comment>
<comment type="pathway">
    <text>Pyrimidine metabolism; UMP biosynthesis via de novo pathway; orotate from (S)-dihydroorotate (NAD(+) route): step 1/1.</text>
</comment>
<comment type="subunit">
    <text evidence="2">Heterotetramer of 2 PyrK and 2 PyrD type B subunits.</text>
</comment>
<comment type="subcellular location">
    <subcellularLocation>
        <location evidence="1">Cytoplasm</location>
    </subcellularLocation>
</comment>
<comment type="similarity">
    <text evidence="3">Belongs to the dihydroorotate dehydrogenase family. Type 1 subfamily.</text>
</comment>
<sequence length="312" mass="33093">MMKNPLAVSIPGLTLKNPIIPASGCFGFGEEYANYYDLDQLGSIMIKATTPQARYGNPTPRVAETPSGMLNAIGLQNPGLEVVMQEKLPKLEKYPNLPIIANVAGACEEDYVAVCAKIGQAPNVKAIELNISCPNVKHGGIAFGTDPEVAFQLTQAVKKVASVPIYVKLSPNVTDIVPIAQAIEAGGADGFSMINTLLGMRIDLKTRKPILANQTGGLSGPAIKPVAIRLIRQVASVSQLPIIGMGGVQTVDDVLEMFMAGASAVGVGTANFTDPYICPKLIDGLPKRMEELGIESLEQLIKEVREGQQNAR</sequence>
<name>PYRDB_ENTFA</name>
<feature type="chain" id="PRO_0000148391" description="Dihydroorotate dehydrogenase B (NAD(+)), catalytic subunit">
    <location>
        <begin position="1"/>
        <end position="312"/>
    </location>
</feature>
<feature type="active site" description="Nucleophile">
    <location>
        <position position="133"/>
    </location>
</feature>
<feature type="binding site" evidence="1">
    <location>
        <position position="23"/>
    </location>
    <ligand>
        <name>FMN</name>
        <dbReference type="ChEBI" id="CHEBI:58210"/>
    </ligand>
</feature>
<feature type="binding site" evidence="1">
    <location>
        <begin position="47"/>
        <end position="48"/>
    </location>
    <ligand>
        <name>FMN</name>
        <dbReference type="ChEBI" id="CHEBI:58210"/>
    </ligand>
</feature>
<feature type="binding site" evidence="1">
    <location>
        <position position="47"/>
    </location>
    <ligand>
        <name>substrate</name>
    </ligand>
</feature>
<feature type="binding site" evidence="1">
    <location>
        <begin position="71"/>
        <end position="75"/>
    </location>
    <ligand>
        <name>substrate</name>
    </ligand>
</feature>
<feature type="binding site" evidence="1">
    <location>
        <position position="102"/>
    </location>
    <ligand>
        <name>FMN</name>
        <dbReference type="ChEBI" id="CHEBI:58210"/>
    </ligand>
</feature>
<feature type="binding site" evidence="1">
    <location>
        <position position="130"/>
    </location>
    <ligand>
        <name>FMN</name>
        <dbReference type="ChEBI" id="CHEBI:58210"/>
    </ligand>
</feature>
<feature type="binding site" evidence="1">
    <location>
        <position position="130"/>
    </location>
    <ligand>
        <name>substrate</name>
    </ligand>
</feature>
<feature type="binding site" evidence="1">
    <location>
        <position position="168"/>
    </location>
    <ligand>
        <name>FMN</name>
        <dbReference type="ChEBI" id="CHEBI:58210"/>
    </ligand>
</feature>
<feature type="binding site" evidence="1">
    <location>
        <position position="194"/>
    </location>
    <ligand>
        <name>FMN</name>
        <dbReference type="ChEBI" id="CHEBI:58210"/>
    </ligand>
</feature>
<feature type="binding site" evidence="1">
    <location>
        <begin position="195"/>
        <end position="196"/>
    </location>
    <ligand>
        <name>substrate</name>
    </ligand>
</feature>
<feature type="binding site" evidence="1">
    <location>
        <position position="220"/>
    </location>
    <ligand>
        <name>FMN</name>
        <dbReference type="ChEBI" id="CHEBI:58210"/>
    </ligand>
</feature>
<feature type="binding site" evidence="1">
    <location>
        <begin position="246"/>
        <end position="247"/>
    </location>
    <ligand>
        <name>FMN</name>
        <dbReference type="ChEBI" id="CHEBI:58210"/>
    </ligand>
</feature>
<feature type="binding site" evidence="1">
    <location>
        <begin position="268"/>
        <end position="269"/>
    </location>
    <ligand>
        <name>FMN</name>
        <dbReference type="ChEBI" id="CHEBI:58210"/>
    </ligand>
</feature>
<dbReference type="EC" id="1.3.1.14"/>
<dbReference type="EMBL" id="AE016830">
    <property type="protein sequence ID" value="AAO81490.1"/>
    <property type="molecule type" value="Genomic_DNA"/>
</dbReference>
<dbReference type="RefSeq" id="NP_815420.1">
    <property type="nucleotide sequence ID" value="NC_004668.1"/>
</dbReference>
<dbReference type="RefSeq" id="WP_002369312.1">
    <property type="nucleotide sequence ID" value="NZ_KE136528.1"/>
</dbReference>
<dbReference type="SMR" id="P0DH74"/>
<dbReference type="STRING" id="226185.EF_1714"/>
<dbReference type="EnsemblBacteria" id="AAO81490">
    <property type="protein sequence ID" value="AAO81490"/>
    <property type="gene ID" value="EF_1714"/>
</dbReference>
<dbReference type="KEGG" id="efa:EF1714"/>
<dbReference type="PATRIC" id="fig|226185.45.peg.1798"/>
<dbReference type="eggNOG" id="COG0167">
    <property type="taxonomic scope" value="Bacteria"/>
</dbReference>
<dbReference type="HOGENOM" id="CLU_042042_0_0_9"/>
<dbReference type="SABIO-RK" id="P0DH74"/>
<dbReference type="UniPathway" id="UPA00070">
    <property type="reaction ID" value="UER00945"/>
</dbReference>
<dbReference type="Proteomes" id="UP000001415">
    <property type="component" value="Chromosome"/>
</dbReference>
<dbReference type="GO" id="GO:0005737">
    <property type="term" value="C:cytoplasm"/>
    <property type="evidence" value="ECO:0007669"/>
    <property type="project" value="UniProtKB-SubCell"/>
</dbReference>
<dbReference type="GO" id="GO:0004589">
    <property type="term" value="F:dihydroorotate dehydrogenase (NAD+) activity"/>
    <property type="evidence" value="ECO:0007669"/>
    <property type="project" value="UniProtKB-EC"/>
</dbReference>
<dbReference type="GO" id="GO:0006207">
    <property type="term" value="P:'de novo' pyrimidine nucleobase biosynthetic process"/>
    <property type="evidence" value="ECO:0007669"/>
    <property type="project" value="InterPro"/>
</dbReference>
<dbReference type="GO" id="GO:0044205">
    <property type="term" value="P:'de novo' UMP biosynthetic process"/>
    <property type="evidence" value="ECO:0007669"/>
    <property type="project" value="UniProtKB-UniRule"/>
</dbReference>
<dbReference type="CDD" id="cd04740">
    <property type="entry name" value="DHOD_1B_like"/>
    <property type="match status" value="1"/>
</dbReference>
<dbReference type="FunFam" id="3.20.20.70:FF:000069">
    <property type="entry name" value="Dihydroorotate dehydrogenase"/>
    <property type="match status" value="1"/>
</dbReference>
<dbReference type="Gene3D" id="3.20.20.70">
    <property type="entry name" value="Aldolase class I"/>
    <property type="match status" value="1"/>
</dbReference>
<dbReference type="HAMAP" id="MF_00224">
    <property type="entry name" value="DHO_dh_type1"/>
    <property type="match status" value="1"/>
</dbReference>
<dbReference type="InterPro" id="IPR013785">
    <property type="entry name" value="Aldolase_TIM"/>
</dbReference>
<dbReference type="InterPro" id="IPR050074">
    <property type="entry name" value="DHO_dehydrogenase"/>
</dbReference>
<dbReference type="InterPro" id="IPR033888">
    <property type="entry name" value="DHOD_1B"/>
</dbReference>
<dbReference type="InterPro" id="IPR024920">
    <property type="entry name" value="Dihydroorotate_DH_1"/>
</dbReference>
<dbReference type="InterPro" id="IPR012135">
    <property type="entry name" value="Dihydroorotate_DH_1_2"/>
</dbReference>
<dbReference type="InterPro" id="IPR005720">
    <property type="entry name" value="Dihydroorotate_DH_cat"/>
</dbReference>
<dbReference type="InterPro" id="IPR001295">
    <property type="entry name" value="Dihydroorotate_DH_CS"/>
</dbReference>
<dbReference type="InterPro" id="IPR049622">
    <property type="entry name" value="Dihydroorotate_DH_I"/>
</dbReference>
<dbReference type="NCBIfam" id="NF005574">
    <property type="entry name" value="PRK07259.1"/>
    <property type="match status" value="1"/>
</dbReference>
<dbReference type="NCBIfam" id="TIGR01037">
    <property type="entry name" value="pyrD_sub1_fam"/>
    <property type="match status" value="1"/>
</dbReference>
<dbReference type="PANTHER" id="PTHR48109:SF1">
    <property type="entry name" value="DIHYDROOROTATE DEHYDROGENASE (FUMARATE)"/>
    <property type="match status" value="1"/>
</dbReference>
<dbReference type="PANTHER" id="PTHR48109">
    <property type="entry name" value="DIHYDROOROTATE DEHYDROGENASE (QUINONE), MITOCHONDRIAL-RELATED"/>
    <property type="match status" value="1"/>
</dbReference>
<dbReference type="Pfam" id="PF01180">
    <property type="entry name" value="DHO_dh"/>
    <property type="match status" value="1"/>
</dbReference>
<dbReference type="PIRSF" id="PIRSF000164">
    <property type="entry name" value="DHO_oxidase"/>
    <property type="match status" value="1"/>
</dbReference>
<dbReference type="SUPFAM" id="SSF51395">
    <property type="entry name" value="FMN-linked oxidoreductases"/>
    <property type="match status" value="1"/>
</dbReference>
<dbReference type="PROSITE" id="PS00911">
    <property type="entry name" value="DHODEHASE_1"/>
    <property type="match status" value="1"/>
</dbReference>
<dbReference type="PROSITE" id="PS00912">
    <property type="entry name" value="DHODEHASE_2"/>
    <property type="match status" value="1"/>
</dbReference>
<protein>
    <recommendedName>
        <fullName>Dihydroorotate dehydrogenase B (NAD(+)), catalytic subunit</fullName>
        <shortName>DHOD B</shortName>
        <shortName>DHODase B</shortName>
        <shortName>DHOdehase B</shortName>
        <ecNumber>1.3.1.14</ecNumber>
    </recommendedName>
    <alternativeName>
        <fullName>Dihydroorotate oxidase B</fullName>
    </alternativeName>
    <alternativeName>
        <fullName>Orotate reductase (NADH)</fullName>
    </alternativeName>
</protein>
<organism>
    <name type="scientific">Enterococcus faecalis (strain ATCC 700802 / V583)</name>
    <dbReference type="NCBI Taxonomy" id="226185"/>
    <lineage>
        <taxon>Bacteria</taxon>
        <taxon>Bacillati</taxon>
        <taxon>Bacillota</taxon>
        <taxon>Bacilli</taxon>
        <taxon>Lactobacillales</taxon>
        <taxon>Enterococcaceae</taxon>
        <taxon>Enterococcus</taxon>
    </lineage>
</organism>
<keyword id="KW-0963">Cytoplasm</keyword>
<keyword id="KW-0285">Flavoprotein</keyword>
<keyword id="KW-0288">FMN</keyword>
<keyword id="KW-0520">NAD</keyword>
<keyword id="KW-0560">Oxidoreductase</keyword>
<keyword id="KW-0665">Pyrimidine biosynthesis</keyword>
<keyword id="KW-1185">Reference proteome</keyword>
<reference key="1">
    <citation type="journal article" date="2003" name="Science">
        <title>Role of mobile DNA in the evolution of vancomycin-resistant Enterococcus faecalis.</title>
        <authorList>
            <person name="Paulsen I.T."/>
            <person name="Banerjei L."/>
            <person name="Myers G.S.A."/>
            <person name="Nelson K.E."/>
            <person name="Seshadri R."/>
            <person name="Read T.D."/>
            <person name="Fouts D.E."/>
            <person name="Eisen J.A."/>
            <person name="Gill S.R."/>
            <person name="Heidelberg J.F."/>
            <person name="Tettelin H."/>
            <person name="Dodson R.J."/>
            <person name="Umayam L.A."/>
            <person name="Brinkac L.M."/>
            <person name="Beanan M.J."/>
            <person name="Daugherty S.C."/>
            <person name="DeBoy R.T."/>
            <person name="Durkin S.A."/>
            <person name="Kolonay J.F."/>
            <person name="Madupu R."/>
            <person name="Nelson W.C."/>
            <person name="Vamathevan J.J."/>
            <person name="Tran B."/>
            <person name="Upton J."/>
            <person name="Hansen T."/>
            <person name="Shetty J."/>
            <person name="Khouri H.M."/>
            <person name="Utterback T.R."/>
            <person name="Radune D."/>
            <person name="Ketchum K.A."/>
            <person name="Dougherty B.A."/>
            <person name="Fraser C.M."/>
        </authorList>
    </citation>
    <scope>NUCLEOTIDE SEQUENCE [LARGE SCALE GENOMIC DNA]</scope>
    <source>
        <strain>ATCC 700802 / V583</strain>
    </source>
</reference>
<reference key="2">
    <citation type="journal article" date="1999" name="Biochemistry">
        <title>Dihydroorotate dehydrogenase B of Enterococcus faecalis. Characterization and insights into chemical mechanism.</title>
        <authorList>
            <person name="Marcinkeviciene J."/>
            <person name="Tinney L.M."/>
            <person name="Wang K.H."/>
            <person name="Rogers M.J."/>
            <person name="Copeland R.A."/>
        </authorList>
    </citation>
    <scope>CATALYTIC ACTIVITY</scope>
    <scope>COFACTOR</scope>
    <scope>SUBUNIT</scope>
    <scope>BIOPHYSICOCHEMICAL PROPERTIES</scope>
    <scope>ENZYME KINETICS</scope>
    <scope>REACTION MECHANISM</scope>
    <source>
        <strain>ATCC 29212 / DSM 2570</strain>
    </source>
</reference>
<gene>
    <name type="primary">pyrDB</name>
    <name type="synonym">pyrD</name>
    <name type="synonym">pyrD-2</name>
    <name type="ordered locus">EF_1714</name>
</gene>
<proteinExistence type="evidence at protein level"/>
<evidence type="ECO:0000250" key="1"/>
<evidence type="ECO:0000269" key="2">
    <source>
    </source>
</evidence>
<evidence type="ECO:0000305" key="3"/>